<organism>
    <name type="scientific">Saccharomyces cerevisiae (strain ATCC 204508 / S288c)</name>
    <name type="common">Baker's yeast</name>
    <dbReference type="NCBI Taxonomy" id="559292"/>
    <lineage>
        <taxon>Eukaryota</taxon>
        <taxon>Fungi</taxon>
        <taxon>Dikarya</taxon>
        <taxon>Ascomycota</taxon>
        <taxon>Saccharomycotina</taxon>
        <taxon>Saccharomycetes</taxon>
        <taxon>Saccharomycetales</taxon>
        <taxon>Saccharomycetaceae</taxon>
        <taxon>Saccharomyces</taxon>
    </lineage>
</organism>
<evidence type="ECO:0000255" key="1">
    <source>
        <dbReference type="PROSITE-ProRule" id="PRU00316"/>
    </source>
</evidence>
<evidence type="ECO:0000256" key="2">
    <source>
        <dbReference type="SAM" id="MobiDB-lite"/>
    </source>
</evidence>
<evidence type="ECO:0000269" key="3">
    <source>
    </source>
</evidence>
<evidence type="ECO:0000305" key="4"/>
<evidence type="ECO:0007744" key="5">
    <source>
    </source>
</evidence>
<evidence type="ECO:0007744" key="6">
    <source>
    </source>
</evidence>
<evidence type="ECO:0007744" key="7">
    <source>
    </source>
</evidence>
<evidence type="ECO:0007744" key="8">
    <source>
    </source>
</evidence>
<reference key="1">
    <citation type="journal article" date="1997" name="Nature">
        <title>The nucleotide sequence of Saccharomyces cerevisiae chromosome V.</title>
        <authorList>
            <person name="Dietrich F.S."/>
            <person name="Mulligan J.T."/>
            <person name="Hennessy K.M."/>
            <person name="Yelton M.A."/>
            <person name="Allen E."/>
            <person name="Araujo R."/>
            <person name="Aviles E."/>
            <person name="Berno A."/>
            <person name="Brennan T."/>
            <person name="Carpenter J."/>
            <person name="Chen E."/>
            <person name="Cherry J.M."/>
            <person name="Chung E."/>
            <person name="Duncan M."/>
            <person name="Guzman E."/>
            <person name="Hartzell G."/>
            <person name="Hunicke-Smith S."/>
            <person name="Hyman R.W."/>
            <person name="Kayser A."/>
            <person name="Komp C."/>
            <person name="Lashkari D."/>
            <person name="Lew H."/>
            <person name="Lin D."/>
            <person name="Mosedale D."/>
            <person name="Nakahara K."/>
            <person name="Namath A."/>
            <person name="Norgren R."/>
            <person name="Oefner P."/>
            <person name="Oh C."/>
            <person name="Petel F.X."/>
            <person name="Roberts D."/>
            <person name="Sehl P."/>
            <person name="Schramm S."/>
            <person name="Shogren T."/>
            <person name="Smith V."/>
            <person name="Taylor P."/>
            <person name="Wei Y."/>
            <person name="Botstein D."/>
            <person name="Davis R.W."/>
        </authorList>
    </citation>
    <scope>NUCLEOTIDE SEQUENCE [LARGE SCALE GENOMIC DNA]</scope>
    <source>
        <strain>ATCC 204508 / S288c</strain>
    </source>
</reference>
<reference key="2">
    <citation type="journal article" date="2014" name="G3 (Bethesda)">
        <title>The reference genome sequence of Saccharomyces cerevisiae: Then and now.</title>
        <authorList>
            <person name="Engel S.R."/>
            <person name="Dietrich F.S."/>
            <person name="Fisk D.G."/>
            <person name="Binkley G."/>
            <person name="Balakrishnan R."/>
            <person name="Costanzo M.C."/>
            <person name="Dwight S.S."/>
            <person name="Hitz B.C."/>
            <person name="Karra K."/>
            <person name="Nash R.S."/>
            <person name="Weng S."/>
            <person name="Wong E.D."/>
            <person name="Lloyd P."/>
            <person name="Skrzypek M.S."/>
            <person name="Miyasato S.R."/>
            <person name="Simison M."/>
            <person name="Cherry J.M."/>
        </authorList>
    </citation>
    <scope>GENOME REANNOTATION</scope>
    <source>
        <strain>ATCC 204508 / S288c</strain>
    </source>
</reference>
<reference key="3">
    <citation type="journal article" date="2007" name="Genome Res.">
        <title>Approaching a complete repository of sequence-verified protein-encoding clones for Saccharomyces cerevisiae.</title>
        <authorList>
            <person name="Hu Y."/>
            <person name="Rolfs A."/>
            <person name="Bhullar B."/>
            <person name="Murthy T.V.S."/>
            <person name="Zhu C."/>
            <person name="Berger M.F."/>
            <person name="Camargo A.A."/>
            <person name="Kelley F."/>
            <person name="McCarron S."/>
            <person name="Jepson D."/>
            <person name="Richardson A."/>
            <person name="Raphael J."/>
            <person name="Moreira D."/>
            <person name="Taycher E."/>
            <person name="Zuo D."/>
            <person name="Mohr S."/>
            <person name="Kane M.F."/>
            <person name="Williamson J."/>
            <person name="Simpson A.J.G."/>
            <person name="Bulyk M.L."/>
            <person name="Harlow E."/>
            <person name="Marsischky G."/>
            <person name="Kolodner R.D."/>
            <person name="LaBaer J."/>
        </authorList>
    </citation>
    <scope>NUCLEOTIDE SEQUENCE [GENOMIC DNA]</scope>
    <source>
        <strain>ATCC 204508 / S288c</strain>
    </source>
</reference>
<reference key="4">
    <citation type="journal article" date="1996" name="Curr. Biol.">
        <title>Fibronectin type III domains in yeast detected by a hidden Markov model.</title>
        <authorList>
            <person name="Bateman A."/>
            <person name="Chothia C."/>
        </authorList>
    </citation>
    <scope>DOMAIN FIBRONECTIN TYPE-III</scope>
</reference>
<reference key="5">
    <citation type="journal article" date="2003" name="Nature">
        <title>Global analysis of protein expression in yeast.</title>
        <authorList>
            <person name="Ghaemmaghami S."/>
            <person name="Huh W.-K."/>
            <person name="Bower K."/>
            <person name="Howson R.W."/>
            <person name="Belle A."/>
            <person name="Dephoure N."/>
            <person name="O'Shea E.K."/>
            <person name="Weissman J.S."/>
        </authorList>
    </citation>
    <scope>LEVEL OF PROTEIN EXPRESSION [LARGE SCALE ANALYSIS]</scope>
</reference>
<reference key="6">
    <citation type="journal article" date="2007" name="J. Proteome Res.">
        <title>Large-scale phosphorylation analysis of alpha-factor-arrested Saccharomyces cerevisiae.</title>
        <authorList>
            <person name="Li X."/>
            <person name="Gerber S.A."/>
            <person name="Rudner A.D."/>
            <person name="Beausoleil S.A."/>
            <person name="Haas W."/>
            <person name="Villen J."/>
            <person name="Elias J.E."/>
            <person name="Gygi S.P."/>
        </authorList>
    </citation>
    <scope>PHOSPHORYLATION [LARGE SCALE ANALYSIS] AT THR-154</scope>
    <scope>IDENTIFICATION BY MASS SPECTROMETRY [LARGE SCALE ANALYSIS]</scope>
    <source>
        <strain>ADR376</strain>
    </source>
</reference>
<reference key="7">
    <citation type="journal article" date="2007" name="Proc. Natl. Acad. Sci. U.S.A.">
        <title>Analysis of phosphorylation sites on proteins from Saccharomyces cerevisiae by electron transfer dissociation (ETD) mass spectrometry.</title>
        <authorList>
            <person name="Chi A."/>
            <person name="Huttenhower C."/>
            <person name="Geer L.Y."/>
            <person name="Coon J.J."/>
            <person name="Syka J.E.P."/>
            <person name="Bai D.L."/>
            <person name="Shabanowitz J."/>
            <person name="Burke D.J."/>
            <person name="Troyanskaya O.G."/>
            <person name="Hunt D.F."/>
        </authorList>
    </citation>
    <scope>PHOSPHORYLATION [LARGE SCALE ANALYSIS] AT THR-154</scope>
    <scope>IDENTIFICATION BY MASS SPECTROMETRY [LARGE SCALE ANALYSIS]</scope>
</reference>
<reference key="8">
    <citation type="journal article" date="2008" name="Mol. Cell. Proteomics">
        <title>A multidimensional chromatography technology for in-depth phosphoproteome analysis.</title>
        <authorList>
            <person name="Albuquerque C.P."/>
            <person name="Smolka M.B."/>
            <person name="Payne S.H."/>
            <person name="Bafna V."/>
            <person name="Eng J."/>
            <person name="Zhou H."/>
        </authorList>
    </citation>
    <scope>PHOSPHORYLATION [LARGE SCALE ANALYSIS] AT SER-501; SER-520 AND SER-802</scope>
    <scope>IDENTIFICATION BY MASS SPECTROMETRY [LARGE SCALE ANALYSIS]</scope>
</reference>
<reference key="9">
    <citation type="journal article" date="2009" name="Science">
        <title>Global analysis of Cdk1 substrate phosphorylation sites provides insights into evolution.</title>
        <authorList>
            <person name="Holt L.J."/>
            <person name="Tuch B.B."/>
            <person name="Villen J."/>
            <person name="Johnson A.D."/>
            <person name="Gygi S.P."/>
            <person name="Morgan D.O."/>
        </authorList>
    </citation>
    <scope>PHOSPHORYLATION [LARGE SCALE ANALYSIS] AT THR-154; SER-520; SER-802; SER-842 AND SER-895</scope>
    <scope>IDENTIFICATION BY MASS SPECTROMETRY [LARGE SCALE ANALYSIS]</scope>
</reference>
<keyword id="KW-0597">Phosphoprotein</keyword>
<keyword id="KW-1185">Reference proteome</keyword>
<dbReference type="EMBL" id="U18779">
    <property type="protein sequence ID" value="AAB64999.1"/>
    <property type="molecule type" value="Genomic_DNA"/>
</dbReference>
<dbReference type="EMBL" id="AY723799">
    <property type="protein sequence ID" value="AAU09716.1"/>
    <property type="molecule type" value="Genomic_DNA"/>
</dbReference>
<dbReference type="EMBL" id="BK006939">
    <property type="protein sequence ID" value="DAA07610.1"/>
    <property type="molecule type" value="Genomic_DNA"/>
</dbReference>
<dbReference type="PIR" id="S30834">
    <property type="entry name" value="S30834"/>
</dbReference>
<dbReference type="SMR" id="P32618"/>
<dbReference type="BioGRID" id="36686">
    <property type="interactions" value="234"/>
</dbReference>
<dbReference type="DIP" id="DIP-2682N"/>
<dbReference type="FunCoup" id="P32618">
    <property type="interactions" value="37"/>
</dbReference>
<dbReference type="IntAct" id="P32618">
    <property type="interactions" value="9"/>
</dbReference>
<dbReference type="MINT" id="P32618"/>
<dbReference type="STRING" id="4932.YEL043W"/>
<dbReference type="GlyGen" id="P32618">
    <property type="glycosylation" value="2 sites, 1 O-linked glycan (2 sites)"/>
</dbReference>
<dbReference type="iPTMnet" id="P32618"/>
<dbReference type="PaxDb" id="4932-YEL043W"/>
<dbReference type="PeptideAtlas" id="P32618"/>
<dbReference type="EnsemblFungi" id="YEL043W_mRNA">
    <property type="protein sequence ID" value="YEL043W"/>
    <property type="gene ID" value="YEL043W"/>
</dbReference>
<dbReference type="KEGG" id="sce:YEL043W"/>
<dbReference type="AGR" id="SGD:S000000769"/>
<dbReference type="SGD" id="S000000769">
    <property type="gene designation" value="YEL043W"/>
</dbReference>
<dbReference type="VEuPathDB" id="FungiDB:YEL043W"/>
<dbReference type="eggNOG" id="ENOG502R2RI">
    <property type="taxonomic scope" value="Eukaryota"/>
</dbReference>
<dbReference type="HOGENOM" id="CLU_012632_0_0_1"/>
<dbReference type="InParanoid" id="P32618"/>
<dbReference type="OMA" id="NYSKGFT"/>
<dbReference type="OrthoDB" id="5572782at2759"/>
<dbReference type="BioCyc" id="YEAST:G3O-30163-MONOMER"/>
<dbReference type="BioGRID-ORCS" id="856668">
    <property type="hits" value="7 hits in 10 CRISPR screens"/>
</dbReference>
<dbReference type="CD-CODE" id="E03F929F">
    <property type="entry name" value="Stress granule"/>
</dbReference>
<dbReference type="PRO" id="PR:P32618"/>
<dbReference type="Proteomes" id="UP000002311">
    <property type="component" value="Chromosome V"/>
</dbReference>
<dbReference type="RNAct" id="P32618">
    <property type="molecule type" value="protein"/>
</dbReference>
<dbReference type="GO" id="GO:0071944">
    <property type="term" value="C:cell periphery"/>
    <property type="evidence" value="ECO:0007005"/>
    <property type="project" value="SGD"/>
</dbReference>
<dbReference type="GO" id="GO:0005783">
    <property type="term" value="C:endoplasmic reticulum"/>
    <property type="evidence" value="ECO:0007005"/>
    <property type="project" value="SGD"/>
</dbReference>
<dbReference type="CDD" id="cd00063">
    <property type="entry name" value="FN3"/>
    <property type="match status" value="1"/>
</dbReference>
<dbReference type="Gene3D" id="2.60.40.10">
    <property type="entry name" value="Immunoglobulins"/>
    <property type="match status" value="1"/>
</dbReference>
<dbReference type="InterPro" id="IPR003961">
    <property type="entry name" value="FN3_dom"/>
</dbReference>
<dbReference type="InterPro" id="IPR036116">
    <property type="entry name" value="FN3_sf"/>
</dbReference>
<dbReference type="InterPro" id="IPR013783">
    <property type="entry name" value="Ig-like_fold"/>
</dbReference>
<dbReference type="SUPFAM" id="SSF49265">
    <property type="entry name" value="Fibronectin type III"/>
    <property type="match status" value="1"/>
</dbReference>
<dbReference type="PROSITE" id="PS50853">
    <property type="entry name" value="FN3"/>
    <property type="match status" value="1"/>
</dbReference>
<proteinExistence type="evidence at protein level"/>
<name>YEF3_YEAST</name>
<comment type="interaction">
    <interactant intactId="EBI-22354">
        <id>P32618</id>
    </interactant>
    <interactant intactId="EBI-23229">
        <id>P53253</id>
        <label>NNF2</label>
    </interactant>
    <organismsDiffer>false</organismsDiffer>
    <experiments>4</experiments>
</comment>
<comment type="miscellaneous">
    <text evidence="3">Present with 149 molecules/cell in log phase SD medium.</text>
</comment>
<feature type="chain" id="PRO_0000202607" description="Uncharacterized protein YEL043W">
    <location>
        <begin position="1"/>
        <end position="956"/>
    </location>
</feature>
<feature type="domain" description="Fibronectin type-III" evidence="1">
    <location>
        <begin position="40"/>
        <end position="141"/>
    </location>
</feature>
<feature type="region of interest" description="Disordered" evidence="2">
    <location>
        <begin position="152"/>
        <end position="173"/>
    </location>
</feature>
<feature type="region of interest" description="Disordered" evidence="2">
    <location>
        <begin position="488"/>
        <end position="600"/>
    </location>
</feature>
<feature type="region of interest" description="Disordered" evidence="2">
    <location>
        <begin position="875"/>
        <end position="956"/>
    </location>
</feature>
<feature type="compositionally biased region" description="Polar residues" evidence="2">
    <location>
        <begin position="153"/>
        <end position="165"/>
    </location>
</feature>
<feature type="compositionally biased region" description="Polar residues" evidence="2">
    <location>
        <begin position="488"/>
        <end position="523"/>
    </location>
</feature>
<feature type="compositionally biased region" description="Low complexity" evidence="2">
    <location>
        <begin position="524"/>
        <end position="543"/>
    </location>
</feature>
<feature type="compositionally biased region" description="Polar residues" evidence="2">
    <location>
        <begin position="552"/>
        <end position="563"/>
    </location>
</feature>
<feature type="compositionally biased region" description="Low complexity" evidence="2">
    <location>
        <begin position="564"/>
        <end position="574"/>
    </location>
</feature>
<feature type="compositionally biased region" description="Polar residues" evidence="2">
    <location>
        <begin position="578"/>
        <end position="599"/>
    </location>
</feature>
<feature type="compositionally biased region" description="Low complexity" evidence="2">
    <location>
        <begin position="895"/>
        <end position="904"/>
    </location>
</feature>
<feature type="modified residue" description="Phosphothreonine" evidence="5 6 8">
    <location>
        <position position="154"/>
    </location>
</feature>
<feature type="modified residue" description="Phosphoserine" evidence="7">
    <location>
        <position position="501"/>
    </location>
</feature>
<feature type="modified residue" description="Phosphoserine" evidence="7 8">
    <location>
        <position position="520"/>
    </location>
</feature>
<feature type="modified residue" description="Phosphoserine" evidence="7 8">
    <location>
        <position position="802"/>
    </location>
</feature>
<feature type="modified residue" description="Phosphoserine" evidence="8">
    <location>
        <position position="842"/>
    </location>
</feature>
<feature type="modified residue" description="Phosphoserine" evidence="8">
    <location>
        <position position="895"/>
    </location>
</feature>
<feature type="sequence conflict" description="In Ref. 3; AAU09716." evidence="4" ref="3">
    <original>F</original>
    <variation>S</variation>
    <location>
        <position position="467"/>
    </location>
</feature>
<gene>
    <name type="ordered locus">YEL043W</name>
    <name type="ORF">SYGP-ORF14</name>
</gene>
<protein>
    <recommendedName>
        <fullName>Uncharacterized protein YEL043W</fullName>
    </recommendedName>
</protein>
<accession>P32618</accession>
<accession>D3DLK6</accession>
<accession>Q66RC2</accession>
<sequence length="956" mass="106133">MPVSVITTVLACLWLSYRLYKFLTIPVSSIVSTLKIKTPPATKVSIDKIATDSVTIHWENEPVKAEDNGSADRNFISHYLLYLNNTQLAIFPNNPNSLYTCCSITGLEAETQYQLDFITINNKGFINKLPSIYCMTKAREANEALKTRKWRRNTITSSTAMQPRNSKSEPAPLPSHYSSVSLSTFSSNITNSATSNNGSNLPAYTSLTTLKDLDSFSIDDLKKILICAQEDLHDVLSQQTSLLQDFQESKLELELELDNLKTHWSHEIDLRKSLKSNIKSLENSKLLTDLKIEKLNKKIDKSKEKISKMRNDMQKWSQEDTELLSKDTIKEKYFKLLNESNASVANINKEIESLQNEISKMEESNKRLNASKKSLITSIVVNANVENDKPIASGELSAVLKKLNDFTLEKNGFLSNAGEEFLSKLNADSSLIKMIKQELSIDQELEANWKLQRSNLLKKISALENQFNEMSLNNRNLKTKLMVQPYKNNGDSLAATNSNNSAEKNRSSGSIQLPLSNNMSRTGSIDLISNNNKSINNSNADSAPPLRLHNPVSYSPSNEPIQPSSSLLSQLTQDTDNRSMLSNHISSNNENKQQPSSYSHALPTTATANATATATATNGHSRSNLWTTAQFAQPSHQQVSTELDQAFEYDNANHLISGLQNMIYDETDYPDNISNYSKGFTTDELDNYWTKQQPQVRSTNESLFSTTGTPMSSYKANPVISPYSSSHLRQTSNATNTNPMHPQSLLAATLNDPSLQSFVRSGSFYSAPQPANSLQNNINGNETENISPRISSDFNLLVPNLSPRLSNDVPIVPGNNTTLTPSHSNILTMNHQPTADNITRRSFHASSPPFNSIWNSNTNQLSPPLEEQYHLDVPVGPKVPAKEPSPKPSHKRNQSNSSISSAWSKFKHKSASSPANADTDIQDSSTPSTSPSGRRMSKLLSKSGMNNLFNPHSHDS</sequence>